<accession>P47470</accession>
<sequence length="160" mass="18966">MLIAIWAMTQEGLIGNNNTLPWMIKQELAHFKKTTLFQALLMGRKTYESLPKVFEKRTIFLLSKDQNYRFEEKGSEVKVINDFWPLIKSYQANKEKDLFICGGKSVYEQTINECDQLIVSIIKKKYKGDQFLKVDLSKFVLNEVVEFEEFNVNYYRKKQQ</sequence>
<organism>
    <name type="scientific">Mycoplasma genitalium (strain ATCC 33530 / DSM 19775 / NCTC 10195 / G37)</name>
    <name type="common">Mycoplasmoides genitalium</name>
    <dbReference type="NCBI Taxonomy" id="243273"/>
    <lineage>
        <taxon>Bacteria</taxon>
        <taxon>Bacillati</taxon>
        <taxon>Mycoplasmatota</taxon>
        <taxon>Mycoplasmoidales</taxon>
        <taxon>Mycoplasmoidaceae</taxon>
        <taxon>Mycoplasmoides</taxon>
    </lineage>
</organism>
<reference key="1">
    <citation type="journal article" date="1995" name="Science">
        <title>The minimal gene complement of Mycoplasma genitalium.</title>
        <authorList>
            <person name="Fraser C.M."/>
            <person name="Gocayne J.D."/>
            <person name="White O."/>
            <person name="Adams M.D."/>
            <person name="Clayton R.A."/>
            <person name="Fleischmann R.D."/>
            <person name="Bult C.J."/>
            <person name="Kerlavage A.R."/>
            <person name="Sutton G.G."/>
            <person name="Kelley J.M."/>
            <person name="Fritchman J.L."/>
            <person name="Weidman J.F."/>
            <person name="Small K.V."/>
            <person name="Sandusky M."/>
            <person name="Fuhrmann J.L."/>
            <person name="Nguyen D.T."/>
            <person name="Utterback T.R."/>
            <person name="Saudek D.M."/>
            <person name="Phillips C.A."/>
            <person name="Merrick J.M."/>
            <person name="Tomb J.-F."/>
            <person name="Dougherty B.A."/>
            <person name="Bott K.F."/>
            <person name="Hu P.-C."/>
            <person name="Lucier T.S."/>
            <person name="Peterson S.N."/>
            <person name="Smith H.O."/>
            <person name="Hutchison C.A. III"/>
            <person name="Venter J.C."/>
        </authorList>
    </citation>
    <scope>NUCLEOTIDE SEQUENCE [LARGE SCALE GENOMIC DNA]</scope>
    <source>
        <strain>ATCC 33530 / DSM 19775 / NCTC 10195 / G37</strain>
    </source>
</reference>
<proteinExistence type="inferred from homology"/>
<feature type="chain" id="PRO_0000186395" description="Dihydrofolate reductase">
    <location>
        <begin position="1"/>
        <end position="160"/>
    </location>
</feature>
<feature type="domain" description="DHFR" evidence="2">
    <location>
        <begin position="1"/>
        <end position="160"/>
    </location>
</feature>
<feature type="binding site" evidence="1">
    <location>
        <begin position="5"/>
        <end position="7"/>
    </location>
    <ligand>
        <name>substrate</name>
    </ligand>
</feature>
<feature type="binding site" evidence="1">
    <location>
        <begin position="6"/>
        <end position="7"/>
    </location>
    <ligand>
        <name>NADP(+)</name>
        <dbReference type="ChEBI" id="CHEBI:58349"/>
    </ligand>
</feature>
<feature type="binding site" evidence="1">
    <location>
        <begin position="14"/>
        <end position="19"/>
    </location>
    <ligand>
        <name>NADP(+)</name>
        <dbReference type="ChEBI" id="CHEBI:58349"/>
    </ligand>
</feature>
<feature type="binding site" evidence="1">
    <location>
        <position position="27"/>
    </location>
    <ligand>
        <name>substrate</name>
    </ligand>
</feature>
<feature type="binding site" evidence="1">
    <location>
        <begin position="43"/>
        <end position="46"/>
    </location>
    <ligand>
        <name>NADP(+)</name>
        <dbReference type="ChEBI" id="CHEBI:58349"/>
    </ligand>
</feature>
<feature type="binding site" evidence="1">
    <location>
        <position position="57"/>
    </location>
    <ligand>
        <name>substrate</name>
    </ligand>
</feature>
<feature type="binding site" evidence="1">
    <location>
        <begin position="62"/>
        <end position="65"/>
    </location>
    <ligand>
        <name>NADP(+)</name>
        <dbReference type="ChEBI" id="CHEBI:58349"/>
    </ligand>
</feature>
<feature type="binding site" evidence="1">
    <location>
        <begin position="101"/>
        <end position="106"/>
    </location>
    <ligand>
        <name>NADP(+)</name>
        <dbReference type="ChEBI" id="CHEBI:58349"/>
    </ligand>
</feature>
<feature type="binding site" evidence="1">
    <location>
        <position position="120"/>
    </location>
    <ligand>
        <name>substrate</name>
    </ligand>
</feature>
<protein>
    <recommendedName>
        <fullName>Dihydrofolate reductase</fullName>
        <ecNumber>1.5.1.3</ecNumber>
    </recommendedName>
</protein>
<comment type="function">
    <text evidence="1">Key enzyme in folate metabolism. Catalyzes an essential reaction for de novo glycine and purine synthesis, and for DNA precursor synthesis (By similarity).</text>
</comment>
<comment type="catalytic activity">
    <reaction evidence="2">
        <text>(6S)-5,6,7,8-tetrahydrofolate + NADP(+) = 7,8-dihydrofolate + NADPH + H(+)</text>
        <dbReference type="Rhea" id="RHEA:15009"/>
        <dbReference type="ChEBI" id="CHEBI:15378"/>
        <dbReference type="ChEBI" id="CHEBI:57451"/>
        <dbReference type="ChEBI" id="CHEBI:57453"/>
        <dbReference type="ChEBI" id="CHEBI:57783"/>
        <dbReference type="ChEBI" id="CHEBI:58349"/>
        <dbReference type="EC" id="1.5.1.3"/>
    </reaction>
</comment>
<comment type="pathway">
    <text>Cofactor biosynthesis; tetrahydrofolate biosynthesis; 5,6,7,8-tetrahydrofolate from 7,8-dihydrofolate: step 1/1.</text>
</comment>
<comment type="similarity">
    <text evidence="3">Belongs to the dihydrofolate reductase family.</text>
</comment>
<name>DYR_MYCGE</name>
<evidence type="ECO:0000250" key="1"/>
<evidence type="ECO:0000255" key="2">
    <source>
        <dbReference type="PROSITE-ProRule" id="PRU00660"/>
    </source>
</evidence>
<evidence type="ECO:0000305" key="3"/>
<gene>
    <name type="primary">folA</name>
    <name type="synonym">dhfR</name>
    <name type="ordered locus">MG228</name>
</gene>
<keyword id="KW-0521">NADP</keyword>
<keyword id="KW-0554">One-carbon metabolism</keyword>
<keyword id="KW-0560">Oxidoreductase</keyword>
<keyword id="KW-1185">Reference proteome</keyword>
<dbReference type="EC" id="1.5.1.3"/>
<dbReference type="EMBL" id="L43967">
    <property type="protein sequence ID" value="AAC71449.1"/>
    <property type="molecule type" value="Genomic_DNA"/>
</dbReference>
<dbReference type="PIR" id="B64225">
    <property type="entry name" value="B64225"/>
</dbReference>
<dbReference type="RefSeq" id="WP_009885765.1">
    <property type="nucleotide sequence ID" value="NC_000908.2"/>
</dbReference>
<dbReference type="SMR" id="P47470"/>
<dbReference type="FunCoup" id="P47470">
    <property type="interactions" value="95"/>
</dbReference>
<dbReference type="STRING" id="243273.MG_228"/>
<dbReference type="GeneID" id="88282374"/>
<dbReference type="KEGG" id="mge:MG_228"/>
<dbReference type="eggNOG" id="COG0262">
    <property type="taxonomic scope" value="Bacteria"/>
</dbReference>
<dbReference type="HOGENOM" id="CLU_043966_5_2_14"/>
<dbReference type="InParanoid" id="P47470"/>
<dbReference type="OrthoDB" id="9804315at2"/>
<dbReference type="BioCyc" id="MGEN243273:G1GJ2-275-MONOMER"/>
<dbReference type="UniPathway" id="UPA00077">
    <property type="reaction ID" value="UER00158"/>
</dbReference>
<dbReference type="Proteomes" id="UP000000807">
    <property type="component" value="Chromosome"/>
</dbReference>
<dbReference type="GO" id="GO:0005829">
    <property type="term" value="C:cytosol"/>
    <property type="evidence" value="ECO:0000318"/>
    <property type="project" value="GO_Central"/>
</dbReference>
<dbReference type="GO" id="GO:0004146">
    <property type="term" value="F:dihydrofolate reductase activity"/>
    <property type="evidence" value="ECO:0000318"/>
    <property type="project" value="GO_Central"/>
</dbReference>
<dbReference type="GO" id="GO:0050661">
    <property type="term" value="F:NADP binding"/>
    <property type="evidence" value="ECO:0000318"/>
    <property type="project" value="GO_Central"/>
</dbReference>
<dbReference type="GO" id="GO:0046452">
    <property type="term" value="P:dihydrofolate metabolic process"/>
    <property type="evidence" value="ECO:0000318"/>
    <property type="project" value="GO_Central"/>
</dbReference>
<dbReference type="GO" id="GO:0046655">
    <property type="term" value="P:folic acid metabolic process"/>
    <property type="evidence" value="ECO:0000318"/>
    <property type="project" value="GO_Central"/>
</dbReference>
<dbReference type="GO" id="GO:0006730">
    <property type="term" value="P:one-carbon metabolic process"/>
    <property type="evidence" value="ECO:0007669"/>
    <property type="project" value="UniProtKB-KW"/>
</dbReference>
<dbReference type="GO" id="GO:0046654">
    <property type="term" value="P:tetrahydrofolate biosynthetic process"/>
    <property type="evidence" value="ECO:0000318"/>
    <property type="project" value="GO_Central"/>
</dbReference>
<dbReference type="CDD" id="cd00209">
    <property type="entry name" value="DHFR"/>
    <property type="match status" value="1"/>
</dbReference>
<dbReference type="Gene3D" id="3.40.430.10">
    <property type="entry name" value="Dihydrofolate Reductase, subunit A"/>
    <property type="match status" value="1"/>
</dbReference>
<dbReference type="InterPro" id="IPR012259">
    <property type="entry name" value="DHFR"/>
</dbReference>
<dbReference type="InterPro" id="IPR024072">
    <property type="entry name" value="DHFR-like_dom_sf"/>
</dbReference>
<dbReference type="InterPro" id="IPR017925">
    <property type="entry name" value="DHFR_CS"/>
</dbReference>
<dbReference type="InterPro" id="IPR001796">
    <property type="entry name" value="DHFR_dom"/>
</dbReference>
<dbReference type="PANTHER" id="PTHR48069">
    <property type="entry name" value="DIHYDROFOLATE REDUCTASE"/>
    <property type="match status" value="1"/>
</dbReference>
<dbReference type="PANTHER" id="PTHR48069:SF3">
    <property type="entry name" value="DIHYDROFOLATE REDUCTASE"/>
    <property type="match status" value="1"/>
</dbReference>
<dbReference type="Pfam" id="PF00186">
    <property type="entry name" value="DHFR_1"/>
    <property type="match status" value="1"/>
</dbReference>
<dbReference type="PRINTS" id="PR00070">
    <property type="entry name" value="DHFR"/>
</dbReference>
<dbReference type="SUPFAM" id="SSF53597">
    <property type="entry name" value="Dihydrofolate reductase-like"/>
    <property type="match status" value="1"/>
</dbReference>
<dbReference type="PROSITE" id="PS00075">
    <property type="entry name" value="DHFR_1"/>
    <property type="match status" value="1"/>
</dbReference>
<dbReference type="PROSITE" id="PS51330">
    <property type="entry name" value="DHFR_2"/>
    <property type="match status" value="1"/>
</dbReference>